<protein>
    <recommendedName>
        <fullName>Myotubularin-related protein DDB_G0290005</fullName>
        <ecNumber>3.1.3.-</ecNumber>
    </recommendedName>
</protein>
<comment type="function">
    <text evidence="1">Phosphatase that acts on lipids with a phosphoinositol headgroup.</text>
</comment>
<comment type="subcellular location">
    <subcellularLocation>
        <location evidence="1">Cytoplasm</location>
    </subcellularLocation>
</comment>
<comment type="similarity">
    <text evidence="5">Belongs to the protein-tyrosine phosphatase family. Non-receptor class myotubularin subfamily.</text>
</comment>
<proteinExistence type="inferred from homology"/>
<gene>
    <name type="ORF">DDB_G0290005</name>
</gene>
<sequence length="1324" mass="149677">MFSNKNTDNVENDNNNALGSVIARINSQNIITKNKAPVISEDFETQDFDYPSFDDETPNYDRPQPTMVENFTLLPGEFVLMITKNVVNLSLTTTTHRIGTLYQTNYQMFFIDDSTRQLVSTIANGQLLQIKKLKGHVTVKYHDNTTPNNNNNNNNNNNNNNNNTNNNNNNNINKSNNSSTDQLNSFSLEKQPSQNENLNNNNNNNNNNNNGNNNINNNNLMNSLTQPSTSSRSRLLKSNSTPINLNESSTSTNSPTLSSTTTTTTTTSSTNGNCSTNTWYSNGVSEKALILEIRCKDFMITRYCLPFNEKGNEAFELMNKLICNNYQDSNQLFSMSYSPFKGVISPIDGWLFYDPIEEYTRQGLIGNSNGSDEWRLTKMNSKYELCSTYPQHFIIPFSISDYLLNKSSSHRNKNRFPVVTWRHKQTHATLSRSSQQTGKSRCEEDELLIQAIRKSKTILPNNNNQQQQPQQQQQTLYIIDIKSTSSSPTSSSSSHCEDISHYSQCQIESECLSNIHELRESQLKLFKVIRNWNEKKGWSEIQSTGWLDQLSKLLMVTKKILTHLHLEGFSCLIHCIDGWDRTCQLSSLVQLCADPYYRTIKGFIVLISKEWLSFGHKFMTRNGQSISSTSTTTTNSSSNGQLTSSSSNTSISSNATTTTTTTTSSKQTSPVFLQFIDVVWQLTKQFPTSFEFSDSFLSVILHHLNSNLFGTFLYDSEKERQQNNLPTETQSLWTLLLSAQKNSSLLNPLFNQQLSNETSSTTNLTATTSIPLTNSTTLDQQLQFKNNNDDGVLFPNPKGVQLWSDYFLKWRNPPKASRKSNTLIAHSLGVSYVNGDLIAFQKKKRSRRSKDGASGSSSGSSGSSSKHHHHHHHHHHHHHHRKSTDEKDSKEKSSKSSRSRTSSSSKRKSLSTSSNSITQPDIKINETITTTTTTPTNTTTLTNTSTTPRNTTTLTNASTTPTTTTTTTTTTTPTKDETINESVQVNNDKLKSPSGDDIKQEQDEMNQFTSQHPNNQMESSSEINQQNEQSQLEQQQEQQQQQEQQLQHEQQQIEQQQLQKQQQQQEQQEQQELEQQEQPNETITYSMESDSQSSISQNQNQLQQQQQQQTLLDPIDESSLLATTTTTTSSTAITSASKLEKELRKQEKEKRKLEKEKKQKERAERKLEKEKKRDQKEREQKEKELLEQQKPKADITVVLQSPSKKKAMSLTMPVRGTKSRISIFSSPLVPTLHPNLSDQNSQTNSSGDNSGNVNNSPNLTSTPISNLSNNNNNNNNSNENSNNNNNNNNNNNDNTSFSKRIFKTLRGTKTFNREPTPTVGTALN</sequence>
<evidence type="ECO:0000250" key="1"/>
<evidence type="ECO:0000255" key="2"/>
<evidence type="ECO:0000255" key="3">
    <source>
        <dbReference type="PROSITE-ProRule" id="PRU00669"/>
    </source>
</evidence>
<evidence type="ECO:0000256" key="4">
    <source>
        <dbReference type="SAM" id="MobiDB-lite"/>
    </source>
</evidence>
<evidence type="ECO:0000305" key="5"/>
<name>MTMR_DICDI</name>
<accession>Q54GQ1</accession>
<feature type="chain" id="PRO_0000346929" description="Myotubularin-related protein DDB_G0290005">
    <location>
        <begin position="1"/>
        <end position="1324"/>
    </location>
</feature>
<feature type="domain" description="Myotubularin phosphatase" evidence="3">
    <location>
        <begin position="349"/>
        <end position="807"/>
    </location>
</feature>
<feature type="region of interest" description="Disordered" evidence="4">
    <location>
        <begin position="140"/>
        <end position="276"/>
    </location>
</feature>
<feature type="region of interest" description="Disordered" evidence="4">
    <location>
        <begin position="624"/>
        <end position="664"/>
    </location>
</feature>
<feature type="region of interest" description="Disordered" evidence="4">
    <location>
        <begin position="841"/>
        <end position="1043"/>
    </location>
</feature>
<feature type="region of interest" description="Disordered" evidence="4">
    <location>
        <begin position="1066"/>
        <end position="1110"/>
    </location>
</feature>
<feature type="region of interest" description="Disordered" evidence="4">
    <location>
        <begin position="1144"/>
        <end position="1213"/>
    </location>
</feature>
<feature type="region of interest" description="Disordered" evidence="4">
    <location>
        <begin position="1232"/>
        <end position="1296"/>
    </location>
</feature>
<feature type="coiled-coil region" evidence="2">
    <location>
        <begin position="1020"/>
        <end position="1195"/>
    </location>
</feature>
<feature type="compositionally biased region" description="Low complexity" evidence="4">
    <location>
        <begin position="144"/>
        <end position="180"/>
    </location>
</feature>
<feature type="compositionally biased region" description="Polar residues" evidence="4">
    <location>
        <begin position="181"/>
        <end position="194"/>
    </location>
</feature>
<feature type="compositionally biased region" description="Low complexity" evidence="4">
    <location>
        <begin position="195"/>
        <end position="222"/>
    </location>
</feature>
<feature type="compositionally biased region" description="Polar residues" evidence="4">
    <location>
        <begin position="223"/>
        <end position="247"/>
    </location>
</feature>
<feature type="compositionally biased region" description="Low complexity" evidence="4">
    <location>
        <begin position="248"/>
        <end position="276"/>
    </location>
</feature>
<feature type="compositionally biased region" description="Low complexity" evidence="4">
    <location>
        <begin position="625"/>
        <end position="664"/>
    </location>
</feature>
<feature type="compositionally biased region" description="Low complexity" evidence="4">
    <location>
        <begin position="852"/>
        <end position="864"/>
    </location>
</feature>
<feature type="compositionally biased region" description="Basic residues" evidence="4">
    <location>
        <begin position="865"/>
        <end position="882"/>
    </location>
</feature>
<feature type="compositionally biased region" description="Basic and acidic residues" evidence="4">
    <location>
        <begin position="883"/>
        <end position="894"/>
    </location>
</feature>
<feature type="compositionally biased region" description="Low complexity" evidence="4">
    <location>
        <begin position="899"/>
        <end position="914"/>
    </location>
</feature>
<feature type="compositionally biased region" description="Low complexity" evidence="4">
    <location>
        <begin position="927"/>
        <end position="973"/>
    </location>
</feature>
<feature type="compositionally biased region" description="Basic and acidic residues" evidence="4">
    <location>
        <begin position="988"/>
        <end position="1002"/>
    </location>
</feature>
<feature type="compositionally biased region" description="Polar residues" evidence="4">
    <location>
        <begin position="1005"/>
        <end position="1024"/>
    </location>
</feature>
<feature type="compositionally biased region" description="Low complexity" evidence="4">
    <location>
        <begin position="1025"/>
        <end position="1043"/>
    </location>
</feature>
<feature type="compositionally biased region" description="Polar residues" evidence="4">
    <location>
        <begin position="1079"/>
        <end position="1090"/>
    </location>
</feature>
<feature type="compositionally biased region" description="Low complexity" evidence="4">
    <location>
        <begin position="1091"/>
        <end position="1109"/>
    </location>
</feature>
<feature type="compositionally biased region" description="Basic and acidic residues" evidence="4">
    <location>
        <begin position="1144"/>
        <end position="1193"/>
    </location>
</feature>
<feature type="compositionally biased region" description="Polar residues" evidence="4">
    <location>
        <begin position="1234"/>
        <end position="1243"/>
    </location>
</feature>
<feature type="compositionally biased region" description="Low complexity" evidence="4">
    <location>
        <begin position="1244"/>
        <end position="1258"/>
    </location>
</feature>
<feature type="compositionally biased region" description="Low complexity" evidence="4">
    <location>
        <begin position="1265"/>
        <end position="1294"/>
    </location>
</feature>
<feature type="active site" description="Phosphocysteine intermediate" evidence="1">
    <location>
        <position position="575"/>
    </location>
</feature>
<feature type="binding site" evidence="1">
    <location>
        <begin position="514"/>
        <end position="515"/>
    </location>
    <ligand>
        <name>substrate</name>
    </ligand>
</feature>
<feature type="binding site" evidence="1">
    <location>
        <begin position="575"/>
        <end position="581"/>
    </location>
    <ligand>
        <name>substrate</name>
    </ligand>
</feature>
<feature type="binding site" evidence="1">
    <location>
        <position position="621"/>
    </location>
    <ligand>
        <name>substrate</name>
    </ligand>
</feature>
<dbReference type="EC" id="3.1.3.-"/>
<dbReference type="EMBL" id="AAFI02000150">
    <property type="protein sequence ID" value="EAL62448.2"/>
    <property type="molecule type" value="Genomic_DNA"/>
</dbReference>
<dbReference type="RefSeq" id="XP_635951.2">
    <property type="nucleotide sequence ID" value="XM_630859.2"/>
</dbReference>
<dbReference type="SMR" id="Q54GQ1"/>
<dbReference type="FunCoup" id="Q54GQ1">
    <property type="interactions" value="141"/>
</dbReference>
<dbReference type="STRING" id="44689.Q54GQ1"/>
<dbReference type="GlyGen" id="Q54GQ1">
    <property type="glycosylation" value="1 site"/>
</dbReference>
<dbReference type="PaxDb" id="44689-DDB0266510"/>
<dbReference type="EnsemblProtists" id="EAL62448">
    <property type="protein sequence ID" value="EAL62448"/>
    <property type="gene ID" value="DDB_G0290005"/>
</dbReference>
<dbReference type="GeneID" id="8627433"/>
<dbReference type="KEGG" id="ddi:DDB_G0290005"/>
<dbReference type="dictyBase" id="DDB_G0290005">
    <property type="gene designation" value="mtm4"/>
</dbReference>
<dbReference type="VEuPathDB" id="AmoebaDB:DDB_G0290005"/>
<dbReference type="eggNOG" id="KOG4471">
    <property type="taxonomic scope" value="Eukaryota"/>
</dbReference>
<dbReference type="HOGENOM" id="CLU_259628_0_0_1"/>
<dbReference type="InParanoid" id="Q54GQ1"/>
<dbReference type="OMA" id="WDDKKSW"/>
<dbReference type="Reactome" id="R-DDI-1483248">
    <property type="pathway name" value="Synthesis of PIPs at the ER membrane"/>
</dbReference>
<dbReference type="Reactome" id="R-DDI-1632852">
    <property type="pathway name" value="Macroautophagy"/>
</dbReference>
<dbReference type="Reactome" id="R-DDI-1660499">
    <property type="pathway name" value="Synthesis of PIPs at the plasma membrane"/>
</dbReference>
<dbReference type="Reactome" id="R-DDI-1660516">
    <property type="pathway name" value="Synthesis of PIPs at the early endosome membrane"/>
</dbReference>
<dbReference type="Reactome" id="R-DDI-1660517">
    <property type="pathway name" value="Synthesis of PIPs at the late endosome membrane"/>
</dbReference>
<dbReference type="Reactome" id="R-DDI-8876198">
    <property type="pathway name" value="RAB GEFs exchange GTP for GDP on RABs"/>
</dbReference>
<dbReference type="PRO" id="PR:Q54GQ1"/>
<dbReference type="Proteomes" id="UP000002195">
    <property type="component" value="Chromosome 5"/>
</dbReference>
<dbReference type="GO" id="GO:0005737">
    <property type="term" value="C:cytoplasm"/>
    <property type="evidence" value="ECO:0000318"/>
    <property type="project" value="GO_Central"/>
</dbReference>
<dbReference type="GO" id="GO:0016020">
    <property type="term" value="C:membrane"/>
    <property type="evidence" value="ECO:0000318"/>
    <property type="project" value="GO_Central"/>
</dbReference>
<dbReference type="GO" id="GO:0004438">
    <property type="term" value="F:phosphatidylinositol-3-phosphate phosphatase activity"/>
    <property type="evidence" value="ECO:0000318"/>
    <property type="project" value="GO_Central"/>
</dbReference>
<dbReference type="GO" id="GO:0046856">
    <property type="term" value="P:phosphatidylinositol dephosphorylation"/>
    <property type="evidence" value="ECO:0000318"/>
    <property type="project" value="GO_Central"/>
</dbReference>
<dbReference type="InterPro" id="IPR030564">
    <property type="entry name" value="Myotubularin"/>
</dbReference>
<dbReference type="InterPro" id="IPR010569">
    <property type="entry name" value="Myotubularin-like_Pase_dom"/>
</dbReference>
<dbReference type="InterPro" id="IPR029021">
    <property type="entry name" value="Prot-tyrosine_phosphatase-like"/>
</dbReference>
<dbReference type="InterPro" id="IPR003595">
    <property type="entry name" value="Tyr_Pase_cat"/>
</dbReference>
<dbReference type="PANTHER" id="PTHR10807">
    <property type="entry name" value="MYOTUBULARIN-RELATED"/>
    <property type="match status" value="1"/>
</dbReference>
<dbReference type="PANTHER" id="PTHR10807:SF112">
    <property type="entry name" value="MYOTUBULARIN-RELATED PROTEIN DDB_G0290005"/>
    <property type="match status" value="1"/>
</dbReference>
<dbReference type="Pfam" id="PF06602">
    <property type="entry name" value="Myotub-related"/>
    <property type="match status" value="1"/>
</dbReference>
<dbReference type="SMART" id="SM00404">
    <property type="entry name" value="PTPc_motif"/>
    <property type="match status" value="1"/>
</dbReference>
<dbReference type="SUPFAM" id="SSF52799">
    <property type="entry name" value="(Phosphotyrosine protein) phosphatases II"/>
    <property type="match status" value="1"/>
</dbReference>
<dbReference type="PROSITE" id="PS51339">
    <property type="entry name" value="PPASE_MYOTUBULARIN"/>
    <property type="match status" value="1"/>
</dbReference>
<keyword id="KW-0175">Coiled coil</keyword>
<keyword id="KW-0963">Cytoplasm</keyword>
<keyword id="KW-0378">Hydrolase</keyword>
<keyword id="KW-1185">Reference proteome</keyword>
<reference key="1">
    <citation type="journal article" date="2005" name="Nature">
        <title>The genome of the social amoeba Dictyostelium discoideum.</title>
        <authorList>
            <person name="Eichinger L."/>
            <person name="Pachebat J.A."/>
            <person name="Gloeckner G."/>
            <person name="Rajandream M.A."/>
            <person name="Sucgang R."/>
            <person name="Berriman M."/>
            <person name="Song J."/>
            <person name="Olsen R."/>
            <person name="Szafranski K."/>
            <person name="Xu Q."/>
            <person name="Tunggal B."/>
            <person name="Kummerfeld S."/>
            <person name="Madera M."/>
            <person name="Konfortov B.A."/>
            <person name="Rivero F."/>
            <person name="Bankier A.T."/>
            <person name="Lehmann R."/>
            <person name="Hamlin N."/>
            <person name="Davies R."/>
            <person name="Gaudet P."/>
            <person name="Fey P."/>
            <person name="Pilcher K."/>
            <person name="Chen G."/>
            <person name="Saunders D."/>
            <person name="Sodergren E.J."/>
            <person name="Davis P."/>
            <person name="Kerhornou A."/>
            <person name="Nie X."/>
            <person name="Hall N."/>
            <person name="Anjard C."/>
            <person name="Hemphill L."/>
            <person name="Bason N."/>
            <person name="Farbrother P."/>
            <person name="Desany B."/>
            <person name="Just E."/>
            <person name="Morio T."/>
            <person name="Rost R."/>
            <person name="Churcher C.M."/>
            <person name="Cooper J."/>
            <person name="Haydock S."/>
            <person name="van Driessche N."/>
            <person name="Cronin A."/>
            <person name="Goodhead I."/>
            <person name="Muzny D.M."/>
            <person name="Mourier T."/>
            <person name="Pain A."/>
            <person name="Lu M."/>
            <person name="Harper D."/>
            <person name="Lindsay R."/>
            <person name="Hauser H."/>
            <person name="James K.D."/>
            <person name="Quiles M."/>
            <person name="Madan Babu M."/>
            <person name="Saito T."/>
            <person name="Buchrieser C."/>
            <person name="Wardroper A."/>
            <person name="Felder M."/>
            <person name="Thangavelu M."/>
            <person name="Johnson D."/>
            <person name="Knights A."/>
            <person name="Loulseged H."/>
            <person name="Mungall K.L."/>
            <person name="Oliver K."/>
            <person name="Price C."/>
            <person name="Quail M.A."/>
            <person name="Urushihara H."/>
            <person name="Hernandez J."/>
            <person name="Rabbinowitsch E."/>
            <person name="Steffen D."/>
            <person name="Sanders M."/>
            <person name="Ma J."/>
            <person name="Kohara Y."/>
            <person name="Sharp S."/>
            <person name="Simmonds M.N."/>
            <person name="Spiegler S."/>
            <person name="Tivey A."/>
            <person name="Sugano S."/>
            <person name="White B."/>
            <person name="Walker D."/>
            <person name="Woodward J.R."/>
            <person name="Winckler T."/>
            <person name="Tanaka Y."/>
            <person name="Shaulsky G."/>
            <person name="Schleicher M."/>
            <person name="Weinstock G.M."/>
            <person name="Rosenthal A."/>
            <person name="Cox E.C."/>
            <person name="Chisholm R.L."/>
            <person name="Gibbs R.A."/>
            <person name="Loomis W.F."/>
            <person name="Platzer M."/>
            <person name="Kay R.R."/>
            <person name="Williams J.G."/>
            <person name="Dear P.H."/>
            <person name="Noegel A.A."/>
            <person name="Barrell B.G."/>
            <person name="Kuspa A."/>
        </authorList>
    </citation>
    <scope>NUCLEOTIDE SEQUENCE [LARGE SCALE GENOMIC DNA]</scope>
    <source>
        <strain>AX4</strain>
    </source>
</reference>
<organism>
    <name type="scientific">Dictyostelium discoideum</name>
    <name type="common">Social amoeba</name>
    <dbReference type="NCBI Taxonomy" id="44689"/>
    <lineage>
        <taxon>Eukaryota</taxon>
        <taxon>Amoebozoa</taxon>
        <taxon>Evosea</taxon>
        <taxon>Eumycetozoa</taxon>
        <taxon>Dictyostelia</taxon>
        <taxon>Dictyosteliales</taxon>
        <taxon>Dictyosteliaceae</taxon>
        <taxon>Dictyostelium</taxon>
    </lineage>
</organism>